<evidence type="ECO:0000256" key="1">
    <source>
        <dbReference type="SAM" id="MobiDB-lite"/>
    </source>
</evidence>
<evidence type="ECO:0000305" key="2"/>
<comment type="subcellular location">
    <subcellularLocation>
        <location evidence="2">Cytoplasm</location>
    </subcellularLocation>
</comment>
<protein>
    <recommendedName>
        <fullName>Antigenic heat-stable 120 kDa protein</fullName>
    </recommendedName>
    <alternativeName>
        <fullName>120 kDa antigen</fullName>
    </alternativeName>
    <alternativeName>
        <fullName>Protein PS 120</fullName>
        <shortName>PS120</shortName>
    </alternativeName>
</protein>
<reference key="1">
    <citation type="journal article" date="2001" name="Int. J. Syst. Evol. Microbiol.">
        <title>Phylogeny of Rickettsia spp. inferred by comparing sequences of 'gene D', which encodes an intracytoplasmic protein.</title>
        <authorList>
            <person name="Sekeyova Z."/>
            <person name="Roux V."/>
            <person name="Raoult D."/>
        </authorList>
    </citation>
    <scope>NUCLEOTIDE SEQUENCE [GENOMIC DNA]</scope>
</reference>
<keyword id="KW-0963">Cytoplasm</keyword>
<feature type="chain" id="PRO_0000097613" description="Antigenic heat-stable 120 kDa protein">
    <location>
        <begin position="1" status="less than"/>
        <end position="1011" status="greater than"/>
    </location>
</feature>
<feature type="region of interest" description="Disordered" evidence="1">
    <location>
        <begin position="1"/>
        <end position="37"/>
    </location>
</feature>
<feature type="region of interest" description="Disordered" evidence="1">
    <location>
        <begin position="54"/>
        <end position="73"/>
    </location>
</feature>
<feature type="region of interest" description="Disordered" evidence="1">
    <location>
        <begin position="348"/>
        <end position="396"/>
    </location>
</feature>
<feature type="compositionally biased region" description="Basic and acidic residues" evidence="1">
    <location>
        <begin position="12"/>
        <end position="27"/>
    </location>
</feature>
<feature type="compositionally biased region" description="Polar residues" evidence="1">
    <location>
        <begin position="348"/>
        <end position="373"/>
    </location>
</feature>
<feature type="compositionally biased region" description="Polar residues" evidence="1">
    <location>
        <begin position="380"/>
        <end position="396"/>
    </location>
</feature>
<feature type="non-terminal residue">
    <location>
        <position position="1"/>
    </location>
</feature>
<feature type="non-terminal residue">
    <location>
        <position position="1011"/>
    </location>
</feature>
<sequence length="1011" mass="110608">DTSEFDPLANKEYTEEQKQTEEQEQKEFLSQTTTPALEADDGFIVTSASFAQSTPSMSALSGNISPDSQTSDPITKAVRETIIQPQKDNLIEQILKDLAALTDRDLAEQKRKEIEEEKEKNKTLSTFFGNPANREFIDKALEKPELKKKLESIEIAGYNNVHNTFSAASGYPGGFKPVQWENHVSASDLRATVVKNDAGDELCTLNETTVKTKPFTLAKQDGTQVQISSYREIDFPIKLDKADGSMHLSMVALKADGTKPSKDKAVYFTAHYEEGPNGKPQLKEISSPKPLKFAGTGDDAIAYIEHGGEIYTLAVTRGKYKEMMKEVELNQGQSVDLSQAEDIIIGQGQSKEQPLITPQQTTSSSVEPPQYKQQVPPITPTNQPLQPETSQMPQSQQVNPNLLNTATALSGSMQDLLNYVNAGLTKEIDSNKQIDLIKEAATAILNNEKSDIAEKQANIIALAENTVNNKNLKPDAKVAGVNAVLETIKNDQNTPNLEKLKMLEATVAIILNSENLEPKQKQQMLEKAVDVGLSLKDDASRAVTIDGIKDVVIKTNLSTEDKGTMLIAVGDKVNVSELSNAEKQKSLGSVLKKGVEAQVLSPAQQQLIQQHLDKITAEQIKKDTIKKVNDILFDPLSNTELKTTNIQAITSNVLDGPATAKVKGEIIQEITNTVAGSSLEAQDKAAIIKGIGETIATHSDTSLSLPNKALIMASAEKGIAESQTNLPDRELMTKGLVDGIYEGKGGPEITKAVSSGIDNSNINDSEKEALKKAKDAASEAALDRDTQNLTEGLKGQNIEEHKPHDDIYNKAREVINAVNPVIEALEKSKEPVVSAEERIVQETSSILNNISKLAVEKVNNFRAMLSPNGNLKTLEEKKEESIKKVDELVKAFGTKSSTEEQQSFIKTNLIDDKTLSKEVRLQTIDKLLQEQKRAEAIENPSVKTEDVRVVSGKSKLKPISKDNPDIEKAKMVVGRDRVNIKGNIKIMGALMNARDIIQSENLNKSTPIKRE</sequence>
<gene>
    <name type="primary">sca4</name>
    <name type="synonym">D</name>
</gene>
<organism>
    <name type="scientific">Rickettsia sibirica subsp. mongolitimonae</name>
    <name type="common">Rickettsia mongolotimonae</name>
    <dbReference type="NCBI Taxonomy" id="45261"/>
    <lineage>
        <taxon>Bacteria</taxon>
        <taxon>Pseudomonadati</taxon>
        <taxon>Pseudomonadota</taxon>
        <taxon>Alphaproteobacteria</taxon>
        <taxon>Rickettsiales</taxon>
        <taxon>Rickettsiaceae</taxon>
        <taxon>Rickettsieae</taxon>
        <taxon>Rickettsia</taxon>
        <taxon>spotted fever group</taxon>
        <taxon>Rickettsia sibirica subgroup</taxon>
    </lineage>
</organism>
<accession>Q9AJ82</accession>
<proteinExistence type="predicted"/>
<dbReference type="EMBL" id="AF151725">
    <property type="protein sequence ID" value="AAK30683.1"/>
    <property type="molecule type" value="Genomic_DNA"/>
</dbReference>
<dbReference type="SMR" id="Q9AJ82"/>
<dbReference type="GO" id="GO:0005737">
    <property type="term" value="C:cytoplasm"/>
    <property type="evidence" value="ECO:0007669"/>
    <property type="project" value="UniProtKB-SubCell"/>
</dbReference>
<dbReference type="InterPro" id="IPR020954">
    <property type="entry name" value="Rickettsia_antigen_120kDa"/>
</dbReference>
<dbReference type="NCBIfam" id="NF038365">
    <property type="entry name" value="Sca4_fam"/>
    <property type="match status" value="1"/>
</dbReference>
<dbReference type="Pfam" id="PF12574">
    <property type="entry name" value="120_Rick_ant"/>
    <property type="match status" value="1"/>
</dbReference>
<name>SCA4_RICSM</name>